<name>NUZM_NEUCR</name>
<feature type="chain" id="PRO_0000118737" description="NADH-ubiquinone oxidoreductase 21.3 kDa subunit">
    <location>
        <begin position="1"/>
        <end position="201"/>
    </location>
</feature>
<feature type="sequence conflict" description="In Ref. 2." evidence="1" ref="2">
    <original>Q</original>
    <variation>QQ</variation>
    <location>
        <position position="22"/>
    </location>
</feature>
<feature type="sequence conflict" description="In Ref. 1; AAA33570." evidence="1" ref="1">
    <original>S</original>
    <variation>T</variation>
    <location>
        <position position="114"/>
    </location>
</feature>
<organism>
    <name type="scientific">Neurospora crassa (strain ATCC 24698 / 74-OR23-1A / CBS 708.71 / DSM 1257 / FGSC 987)</name>
    <dbReference type="NCBI Taxonomy" id="367110"/>
    <lineage>
        <taxon>Eukaryota</taxon>
        <taxon>Fungi</taxon>
        <taxon>Dikarya</taxon>
        <taxon>Ascomycota</taxon>
        <taxon>Pezizomycotina</taxon>
        <taxon>Sordariomycetes</taxon>
        <taxon>Sordariomycetidae</taxon>
        <taxon>Sordariales</taxon>
        <taxon>Sordariaceae</taxon>
        <taxon>Neurospora</taxon>
    </lineage>
</organism>
<comment type="function">
    <text>Transfer of electrons from NADH to the respiratory chain. The immediate electron acceptor for the enzyme is believed to be ubiquinone.</text>
</comment>
<comment type="catalytic activity">
    <reaction>
        <text>a ubiquinone + NADH + 5 H(+)(in) = a ubiquinol + NAD(+) + 4 H(+)(out)</text>
        <dbReference type="Rhea" id="RHEA:29091"/>
        <dbReference type="Rhea" id="RHEA-COMP:9565"/>
        <dbReference type="Rhea" id="RHEA-COMP:9566"/>
        <dbReference type="ChEBI" id="CHEBI:15378"/>
        <dbReference type="ChEBI" id="CHEBI:16389"/>
        <dbReference type="ChEBI" id="CHEBI:17976"/>
        <dbReference type="ChEBI" id="CHEBI:57540"/>
        <dbReference type="ChEBI" id="CHEBI:57945"/>
        <dbReference type="EC" id="7.1.1.2"/>
    </reaction>
</comment>
<comment type="subunit">
    <text>Complex I is composed of about 40 different subunits.</text>
</comment>
<comment type="subcellular location">
    <subcellularLocation>
        <location>Mitochondrion inner membrane</location>
    </subcellularLocation>
    <text>Importation into mitochondrion is membrane potential dependent.</text>
</comment>
<accession>P19968</accession>
<accession>Q7RVC1</accession>
<accession>Q871L0</accession>
<proteinExistence type="evidence at transcript level"/>
<keyword id="KW-0472">Membrane</keyword>
<keyword id="KW-0496">Mitochondrion</keyword>
<keyword id="KW-0999">Mitochondrion inner membrane</keyword>
<keyword id="KW-0520">NAD</keyword>
<keyword id="KW-0560">Oxidoreductase</keyword>
<keyword id="KW-1185">Reference proteome</keyword>
<keyword id="KW-1278">Translocase</keyword>
<keyword id="KW-0830">Ubiquinone</keyword>
<sequence length="201" mass="21333">MASKVVTGVVKTTAGGVVPVSQKYTVQSVGVWERIRRAFAIDPNRSNGVPLVPYNRNPSPGSLDPLAYDDPVTIPAGDIADNPYWKRDARRNYPRLSVVGQAEAVALLSVGSASHPRVELVGENGSKQLVAAQEAGKTGGLAKYFEGTGVEAGKLVLAETGGLPPLPSGEKLGEGGKWDVYKYQLAEEPSYSEAYPCRSFS</sequence>
<protein>
    <recommendedName>
        <fullName>NADH-ubiquinone oxidoreductase 21.3 kDa subunit</fullName>
        <ecNumber>7.1.1.2</ecNumber>
    </recommendedName>
</protein>
<reference key="1">
    <citation type="journal article" date="1990" name="Biochem. Biophys. Res. Commun.">
        <title>Primary structure, in vitro expression and import into mitochondria of a 29/21-kDa subunit of complex I from Neurospora crassa.</title>
        <authorList>
            <person name="Videira A."/>
            <person name="Tropschug M."/>
            <person name="Werner S."/>
        </authorList>
    </citation>
    <scope>NUCLEOTIDE SEQUENCE [MRNA]</scope>
</reference>
<reference key="2">
    <citation type="journal article" date="2003" name="Nucleic Acids Res.">
        <title>What's in the genome of a filamentous fungus? Analysis of the Neurospora genome sequence.</title>
        <authorList>
            <person name="Mannhaupt G."/>
            <person name="Montrone C."/>
            <person name="Haase D."/>
            <person name="Mewes H.-W."/>
            <person name="Aign V."/>
            <person name="Hoheisel J.D."/>
            <person name="Fartmann B."/>
            <person name="Nyakatura G."/>
            <person name="Kempken F."/>
            <person name="Maier J."/>
            <person name="Schulte U."/>
        </authorList>
    </citation>
    <scope>NUCLEOTIDE SEQUENCE [LARGE SCALE GENOMIC DNA]</scope>
    <source>
        <strain>ATCC 24698 / 74-OR23-1A / CBS 708.71 / DSM 1257 / FGSC 987</strain>
    </source>
</reference>
<reference key="3">
    <citation type="journal article" date="2003" name="Nature">
        <title>The genome sequence of the filamentous fungus Neurospora crassa.</title>
        <authorList>
            <person name="Galagan J.E."/>
            <person name="Calvo S.E."/>
            <person name="Borkovich K.A."/>
            <person name="Selker E.U."/>
            <person name="Read N.D."/>
            <person name="Jaffe D.B."/>
            <person name="FitzHugh W."/>
            <person name="Ma L.-J."/>
            <person name="Smirnov S."/>
            <person name="Purcell S."/>
            <person name="Rehman B."/>
            <person name="Elkins T."/>
            <person name="Engels R."/>
            <person name="Wang S."/>
            <person name="Nielsen C.B."/>
            <person name="Butler J."/>
            <person name="Endrizzi M."/>
            <person name="Qui D."/>
            <person name="Ianakiev P."/>
            <person name="Bell-Pedersen D."/>
            <person name="Nelson M.A."/>
            <person name="Werner-Washburne M."/>
            <person name="Selitrennikoff C.P."/>
            <person name="Kinsey J.A."/>
            <person name="Braun E.L."/>
            <person name="Zelter A."/>
            <person name="Schulte U."/>
            <person name="Kothe G.O."/>
            <person name="Jedd G."/>
            <person name="Mewes H.-W."/>
            <person name="Staben C."/>
            <person name="Marcotte E."/>
            <person name="Greenberg D."/>
            <person name="Roy A."/>
            <person name="Foley K."/>
            <person name="Naylor J."/>
            <person name="Stange-Thomann N."/>
            <person name="Barrett R."/>
            <person name="Gnerre S."/>
            <person name="Kamal M."/>
            <person name="Kamvysselis M."/>
            <person name="Mauceli E.W."/>
            <person name="Bielke C."/>
            <person name="Rudd S."/>
            <person name="Frishman D."/>
            <person name="Krystofova S."/>
            <person name="Rasmussen C."/>
            <person name="Metzenberg R.L."/>
            <person name="Perkins D.D."/>
            <person name="Kroken S."/>
            <person name="Cogoni C."/>
            <person name="Macino G."/>
            <person name="Catcheside D.E.A."/>
            <person name="Li W."/>
            <person name="Pratt R.J."/>
            <person name="Osmani S.A."/>
            <person name="DeSouza C.P.C."/>
            <person name="Glass N.L."/>
            <person name="Orbach M.J."/>
            <person name="Berglund J.A."/>
            <person name="Voelker R."/>
            <person name="Yarden O."/>
            <person name="Plamann M."/>
            <person name="Seiler S."/>
            <person name="Dunlap J.C."/>
            <person name="Radford A."/>
            <person name="Aramayo R."/>
            <person name="Natvig D.O."/>
            <person name="Alex L.A."/>
            <person name="Mannhaupt G."/>
            <person name="Ebbole D.J."/>
            <person name="Freitag M."/>
            <person name="Paulsen I."/>
            <person name="Sachs M.S."/>
            <person name="Lander E.S."/>
            <person name="Nusbaum C."/>
            <person name="Birren B.W."/>
        </authorList>
    </citation>
    <scope>NUCLEOTIDE SEQUENCE [LARGE SCALE GENOMIC DNA]</scope>
    <source>
        <strain>ATCC 24698 / 74-OR23-1A / CBS 708.71 / DSM 1257 / FGSC 987</strain>
    </source>
</reference>
<gene>
    <name type="ORF">20H10.080</name>
    <name type="ORF">NCU08930</name>
</gene>
<dbReference type="EC" id="7.1.1.2"/>
<dbReference type="EMBL" id="M32244">
    <property type="protein sequence ID" value="AAA33570.1"/>
    <property type="molecule type" value="mRNA"/>
</dbReference>
<dbReference type="EMBL" id="BX294024">
    <property type="protein sequence ID" value="CAD70991.1"/>
    <property type="molecule type" value="Genomic_DNA"/>
</dbReference>
<dbReference type="EMBL" id="CM002240">
    <property type="protein sequence ID" value="EAA31561.1"/>
    <property type="molecule type" value="Genomic_DNA"/>
</dbReference>
<dbReference type="PIR" id="A34051">
    <property type="entry name" value="A34051"/>
</dbReference>
<dbReference type="SMR" id="P19968"/>
<dbReference type="STRING" id="367110.P19968"/>
<dbReference type="PaxDb" id="5141-EFNCRP00000008118"/>
<dbReference type="EnsemblFungi" id="EAA31561">
    <property type="protein sequence ID" value="EAA31561"/>
    <property type="gene ID" value="NCU08930"/>
</dbReference>
<dbReference type="KEGG" id="ncr:NCU08930"/>
<dbReference type="VEuPathDB" id="FungiDB:NCU08930"/>
<dbReference type="HOGENOM" id="CLU_081626_1_0_1"/>
<dbReference type="InParanoid" id="P19968"/>
<dbReference type="OMA" id="GYPCRTF"/>
<dbReference type="OrthoDB" id="2093493at2759"/>
<dbReference type="Proteomes" id="UP000001805">
    <property type="component" value="Chromosome 2, Linkage Group V"/>
</dbReference>
<dbReference type="GO" id="GO:0005743">
    <property type="term" value="C:mitochondrial inner membrane"/>
    <property type="evidence" value="ECO:0007669"/>
    <property type="project" value="UniProtKB-SubCell"/>
</dbReference>
<dbReference type="GO" id="GO:0008137">
    <property type="term" value="F:NADH dehydrogenase (ubiquinone) activity"/>
    <property type="evidence" value="ECO:0007669"/>
    <property type="project" value="UniProtKB-EC"/>
</dbReference>
<dbReference type="CDD" id="cd22849">
    <property type="entry name" value="NuzM"/>
    <property type="match status" value="1"/>
</dbReference>
<dbReference type="InterPro" id="IPR016813">
    <property type="entry name" value="NADH_Ub_cplx-1_21kDa"/>
</dbReference>
<dbReference type="PANTHER" id="PTHR37325">
    <property type="entry name" value="OXIDOREDUCTASE 21 KDA SUBUNIT, PUTATIVE (AFU_ORTHOLOGUE AFUA_4G05910)-RELATED"/>
    <property type="match status" value="1"/>
</dbReference>
<dbReference type="PANTHER" id="PTHR37325:SF1">
    <property type="entry name" value="OXIDOREDUCTASE 21 KDA SUBUNIT, PUTATIVE (AFU_ORTHOLOGUE AFUA_4G05910)-RELATED"/>
    <property type="match status" value="1"/>
</dbReference>
<dbReference type="PIRSF" id="PIRSF022976">
    <property type="entry name" value="NADH_Oxi_21kDa"/>
    <property type="match status" value="1"/>
</dbReference>
<evidence type="ECO:0000305" key="1"/>